<evidence type="ECO:0000255" key="1">
    <source>
        <dbReference type="HAMAP-Rule" id="MF_00531"/>
    </source>
</evidence>
<evidence type="ECO:0000305" key="2"/>
<comment type="function">
    <text evidence="1">Protein S19 forms a complex with S13 that binds strongly to the 16S ribosomal RNA.</text>
</comment>
<comment type="similarity">
    <text evidence="1">Belongs to the universal ribosomal protein uS19 family.</text>
</comment>
<name>RS19_BURO1</name>
<proteinExistence type="inferred from homology"/>
<organism>
    <name type="scientific">Burkholderia orbicola (strain AU 1054)</name>
    <dbReference type="NCBI Taxonomy" id="331271"/>
    <lineage>
        <taxon>Bacteria</taxon>
        <taxon>Pseudomonadati</taxon>
        <taxon>Pseudomonadota</taxon>
        <taxon>Betaproteobacteria</taxon>
        <taxon>Burkholderiales</taxon>
        <taxon>Burkholderiaceae</taxon>
        <taxon>Burkholderia</taxon>
        <taxon>Burkholderia cepacia complex</taxon>
        <taxon>Burkholderia orbicola</taxon>
    </lineage>
</organism>
<protein>
    <recommendedName>
        <fullName evidence="1">Small ribosomal subunit protein uS19</fullName>
    </recommendedName>
    <alternativeName>
        <fullName evidence="2">30S ribosomal protein S19</fullName>
    </alternativeName>
</protein>
<sequence>MARSVKKGPFCDAHLLKKVEAAAASRDKKPIKTWSRRSTILPDFIGLTIAVHNGRQHVPVYISENMVGHKLGEFALTRTFKGHAADKKAKK</sequence>
<feature type="chain" id="PRO_0000265335" description="Small ribosomal subunit protein uS19">
    <location>
        <begin position="1"/>
        <end position="91"/>
    </location>
</feature>
<gene>
    <name evidence="1" type="primary">rpsS</name>
    <name type="ordered locus">Bcen_2755</name>
</gene>
<dbReference type="EMBL" id="CP000378">
    <property type="protein sequence ID" value="ABF77653.1"/>
    <property type="molecule type" value="Genomic_DNA"/>
</dbReference>
<dbReference type="SMR" id="Q1BRV2"/>
<dbReference type="HOGENOM" id="CLU_144911_0_1_4"/>
<dbReference type="GO" id="GO:0005737">
    <property type="term" value="C:cytoplasm"/>
    <property type="evidence" value="ECO:0007669"/>
    <property type="project" value="UniProtKB-ARBA"/>
</dbReference>
<dbReference type="GO" id="GO:0015935">
    <property type="term" value="C:small ribosomal subunit"/>
    <property type="evidence" value="ECO:0007669"/>
    <property type="project" value="InterPro"/>
</dbReference>
<dbReference type="GO" id="GO:0019843">
    <property type="term" value="F:rRNA binding"/>
    <property type="evidence" value="ECO:0007669"/>
    <property type="project" value="UniProtKB-UniRule"/>
</dbReference>
<dbReference type="GO" id="GO:0003735">
    <property type="term" value="F:structural constituent of ribosome"/>
    <property type="evidence" value="ECO:0007669"/>
    <property type="project" value="InterPro"/>
</dbReference>
<dbReference type="GO" id="GO:0000028">
    <property type="term" value="P:ribosomal small subunit assembly"/>
    <property type="evidence" value="ECO:0007669"/>
    <property type="project" value="TreeGrafter"/>
</dbReference>
<dbReference type="GO" id="GO:0006412">
    <property type="term" value="P:translation"/>
    <property type="evidence" value="ECO:0007669"/>
    <property type="project" value="UniProtKB-UniRule"/>
</dbReference>
<dbReference type="FunFam" id="3.30.860.10:FF:000001">
    <property type="entry name" value="30S ribosomal protein S19"/>
    <property type="match status" value="1"/>
</dbReference>
<dbReference type="Gene3D" id="3.30.860.10">
    <property type="entry name" value="30s Ribosomal Protein S19, Chain A"/>
    <property type="match status" value="1"/>
</dbReference>
<dbReference type="HAMAP" id="MF_00531">
    <property type="entry name" value="Ribosomal_uS19"/>
    <property type="match status" value="1"/>
</dbReference>
<dbReference type="InterPro" id="IPR002222">
    <property type="entry name" value="Ribosomal_uS19"/>
</dbReference>
<dbReference type="InterPro" id="IPR005732">
    <property type="entry name" value="Ribosomal_uS19_bac-type"/>
</dbReference>
<dbReference type="InterPro" id="IPR020934">
    <property type="entry name" value="Ribosomal_uS19_CS"/>
</dbReference>
<dbReference type="InterPro" id="IPR023575">
    <property type="entry name" value="Ribosomal_uS19_SF"/>
</dbReference>
<dbReference type="NCBIfam" id="TIGR01050">
    <property type="entry name" value="rpsS_bact"/>
    <property type="match status" value="1"/>
</dbReference>
<dbReference type="PANTHER" id="PTHR11880">
    <property type="entry name" value="RIBOSOMAL PROTEIN S19P FAMILY MEMBER"/>
    <property type="match status" value="1"/>
</dbReference>
<dbReference type="PANTHER" id="PTHR11880:SF8">
    <property type="entry name" value="SMALL RIBOSOMAL SUBUNIT PROTEIN US19M"/>
    <property type="match status" value="1"/>
</dbReference>
<dbReference type="Pfam" id="PF00203">
    <property type="entry name" value="Ribosomal_S19"/>
    <property type="match status" value="1"/>
</dbReference>
<dbReference type="PIRSF" id="PIRSF002144">
    <property type="entry name" value="Ribosomal_S19"/>
    <property type="match status" value="1"/>
</dbReference>
<dbReference type="PRINTS" id="PR00975">
    <property type="entry name" value="RIBOSOMALS19"/>
</dbReference>
<dbReference type="SUPFAM" id="SSF54570">
    <property type="entry name" value="Ribosomal protein S19"/>
    <property type="match status" value="1"/>
</dbReference>
<dbReference type="PROSITE" id="PS00323">
    <property type="entry name" value="RIBOSOMAL_S19"/>
    <property type="match status" value="1"/>
</dbReference>
<reference key="1">
    <citation type="submission" date="2006-05" db="EMBL/GenBank/DDBJ databases">
        <title>Complete sequence of chromosome 1 of Burkholderia cenocepacia AU 1054.</title>
        <authorList>
            <consortium name="US DOE Joint Genome Institute"/>
            <person name="Copeland A."/>
            <person name="Lucas S."/>
            <person name="Lapidus A."/>
            <person name="Barry K."/>
            <person name="Detter J.C."/>
            <person name="Glavina del Rio T."/>
            <person name="Hammon N."/>
            <person name="Israni S."/>
            <person name="Dalin E."/>
            <person name="Tice H."/>
            <person name="Pitluck S."/>
            <person name="Chain P."/>
            <person name="Malfatti S."/>
            <person name="Shin M."/>
            <person name="Vergez L."/>
            <person name="Schmutz J."/>
            <person name="Larimer F."/>
            <person name="Land M."/>
            <person name="Hauser L."/>
            <person name="Kyrpides N."/>
            <person name="Lykidis A."/>
            <person name="LiPuma J.J."/>
            <person name="Konstantinidis K."/>
            <person name="Tiedje J.M."/>
            <person name="Richardson P."/>
        </authorList>
    </citation>
    <scope>NUCLEOTIDE SEQUENCE [LARGE SCALE GENOMIC DNA]</scope>
    <source>
        <strain>AU 1054</strain>
    </source>
</reference>
<keyword id="KW-0687">Ribonucleoprotein</keyword>
<keyword id="KW-0689">Ribosomal protein</keyword>
<keyword id="KW-0694">RNA-binding</keyword>
<keyword id="KW-0699">rRNA-binding</keyword>
<accession>Q1BRV2</accession>